<keyword id="KW-0002">3D-structure</keyword>
<keyword id="KW-0007">Acetylation</keyword>
<keyword id="KW-0013">ADP-ribosylation</keyword>
<keyword id="KW-0963">Cytoplasm</keyword>
<keyword id="KW-0903">Direct protein sequencing</keyword>
<keyword id="KW-1017">Isopeptide bond</keyword>
<keyword id="KW-0479">Metal-binding</keyword>
<keyword id="KW-0539">Nucleus</keyword>
<keyword id="KW-0597">Phosphoprotein</keyword>
<keyword id="KW-1185">Reference proteome</keyword>
<keyword id="KW-0687">Ribonucleoprotein</keyword>
<keyword id="KW-0689">Ribosomal protein</keyword>
<keyword id="KW-0832">Ubl conjugation</keyword>
<keyword id="KW-0862">Zinc</keyword>
<keyword id="KW-0863">Zinc-finger</keyword>
<organism>
    <name type="scientific">Rattus norvegicus</name>
    <name type="common">Rat</name>
    <dbReference type="NCBI Taxonomy" id="10116"/>
    <lineage>
        <taxon>Eukaryota</taxon>
        <taxon>Metazoa</taxon>
        <taxon>Chordata</taxon>
        <taxon>Craniata</taxon>
        <taxon>Vertebrata</taxon>
        <taxon>Euteleostomi</taxon>
        <taxon>Mammalia</taxon>
        <taxon>Eutheria</taxon>
        <taxon>Euarchontoglires</taxon>
        <taxon>Glires</taxon>
        <taxon>Rodentia</taxon>
        <taxon>Myomorpha</taxon>
        <taxon>Muroidea</taxon>
        <taxon>Muridae</taxon>
        <taxon>Murinae</taxon>
        <taxon>Rattus</taxon>
    </lineage>
</organism>
<sequence>MQIFVKTLTGKTITLEVEPSDTIENVKAKIQDKEGIPPDQQRLIFAGKQLEDGRTLSDYNIQKESTLHLVLRLRGGAKKRKKKSYTTPKKNKHKRKKVKLAVLKYYKVDENGKISRLRRECPSDECGAGVFMGSHFDRHYCGKCCLTYCFNKPEDK</sequence>
<proteinExistence type="evidence at protein level"/>
<reference key="1">
    <citation type="journal article" date="1995" name="Biochem. Biophys. Res. Commun.">
        <title>The carboxyl extensions of two rat ubiquitin fusion proteins are ribosomal proteins S27a and L40.</title>
        <authorList>
            <person name="Chan Y.-L."/>
            <person name="Suzuki K."/>
            <person name="Wool I.G."/>
        </authorList>
    </citation>
    <scope>NUCLEOTIDE SEQUENCE [MRNA]</scope>
    <scope>PROTEIN SEQUENCE OF 77-156</scope>
    <source>
        <strain>Sprague-Dawley</strain>
        <tissue>Liver</tissue>
    </source>
</reference>
<reference key="2">
    <citation type="journal article" date="1994" name="Biochim. Biophys. Acta">
        <title>Differential feeding-related regulation of ubiquitin and calbindin9kDa in rat duodenum.</title>
        <authorList>
            <person name="Hubbard M.J."/>
            <person name="Carne A."/>
        </authorList>
    </citation>
    <scope>PROTEIN SEQUENCE OF 1-76</scope>
    <source>
        <strain>Wistar</strain>
        <tissue>Duodenum</tissue>
    </source>
</reference>
<reference key="3">
    <citation type="submission" date="2007-07" db="UniProtKB">
        <authorList>
            <person name="Lubec G."/>
            <person name="Diao W."/>
            <person name="Kang S.U."/>
        </authorList>
    </citation>
    <scope>PROTEIN SEQUENCE OF 30-42 AND 55-72</scope>
    <scope>IDENTIFICATION BY MASS SPECTROMETRY</scope>
    <source>
        <strain>Sprague-Dawley</strain>
        <tissue>Brain</tissue>
        <tissue>Hippocampus</tissue>
    </source>
</reference>
<evidence type="ECO:0000250" key="1"/>
<evidence type="ECO:0000250" key="2">
    <source>
        <dbReference type="UniProtKB" id="P62979"/>
    </source>
</evidence>
<evidence type="ECO:0000250" key="3">
    <source>
        <dbReference type="UniProtKB" id="P62983"/>
    </source>
</evidence>
<evidence type="ECO:0000255" key="4">
    <source>
        <dbReference type="PROSITE-ProRule" id="PRU00214"/>
    </source>
</evidence>
<evidence type="ECO:0000305" key="5"/>
<dbReference type="EMBL" id="X81839">
    <property type="protein sequence ID" value="CAA57432.1"/>
    <property type="molecule type" value="mRNA"/>
</dbReference>
<dbReference type="PIR" id="I52328">
    <property type="entry name" value="I52328"/>
</dbReference>
<dbReference type="RefSeq" id="NP_001292372.1">
    <property type="nucleotide sequence ID" value="NM_001305443.1"/>
</dbReference>
<dbReference type="RefSeq" id="NP_112375.1">
    <property type="nucleotide sequence ID" value="NM_031113.2"/>
</dbReference>
<dbReference type="PDB" id="7QGG">
    <property type="method" value="EM"/>
    <property type="resolution" value="2.86 A"/>
    <property type="chains" value="Sf=1-156"/>
</dbReference>
<dbReference type="PDBsum" id="7QGG"/>
<dbReference type="BMRB" id="P62982"/>
<dbReference type="EMDB" id="EMD-13954"/>
<dbReference type="SMR" id="P62982"/>
<dbReference type="BioGRID" id="249649">
    <property type="interactions" value="1"/>
</dbReference>
<dbReference type="BioGRID" id="3420481">
    <property type="interactions" value="1"/>
</dbReference>
<dbReference type="FunCoup" id="P62982">
    <property type="interactions" value="2510"/>
</dbReference>
<dbReference type="IntAct" id="P62982">
    <property type="interactions" value="3"/>
</dbReference>
<dbReference type="STRING" id="10116.ENSRNOP00000005872"/>
<dbReference type="iPTMnet" id="P62982"/>
<dbReference type="PhosphoSitePlus" id="P62982"/>
<dbReference type="jPOST" id="P62982"/>
<dbReference type="PaxDb" id="10116-ENSRNOP00000005872"/>
<dbReference type="ABCD" id="P62982">
    <property type="antibodies" value="3 sequenced antibodies"/>
</dbReference>
<dbReference type="Ensembl" id="ENSRNOT00000005872.4">
    <property type="protein sequence ID" value="ENSRNOP00000005872.1"/>
    <property type="gene ID" value="ENSRNOG00000004426.4"/>
</dbReference>
<dbReference type="Ensembl" id="ENSRNOT00000049535.3">
    <property type="protein sequence ID" value="ENSRNOP00000048664.1"/>
    <property type="gene ID" value="ENSRNOG00000034246.3"/>
</dbReference>
<dbReference type="GeneID" id="100912032"/>
<dbReference type="KEGG" id="rno:100912032"/>
<dbReference type="AGR" id="RGD:6489478"/>
<dbReference type="CTD" id="6233"/>
<dbReference type="RGD" id="6489478">
    <property type="gene designation" value="Rps27a"/>
</dbReference>
<dbReference type="eggNOG" id="KOG0004">
    <property type="taxonomic scope" value="Eukaryota"/>
</dbReference>
<dbReference type="GeneTree" id="ENSGT00910000144152"/>
<dbReference type="HOGENOM" id="CLU_010412_2_0_1"/>
<dbReference type="InParanoid" id="P62982"/>
<dbReference type="OMA" id="IFINIPY"/>
<dbReference type="OrthoDB" id="428577at2759"/>
<dbReference type="PhylomeDB" id="P62982"/>
<dbReference type="TreeFam" id="TF300036"/>
<dbReference type="Reactome" id="R-RNO-110312">
    <property type="pathway name" value="Translesion synthesis by REV1"/>
</dbReference>
<dbReference type="Reactome" id="R-RNO-110314">
    <property type="pathway name" value="Recognition of DNA damage by PCNA-containing replication complex"/>
</dbReference>
<dbReference type="Reactome" id="R-RNO-110320">
    <property type="pathway name" value="Translesion Synthesis by POLH"/>
</dbReference>
<dbReference type="Reactome" id="R-RNO-1169091">
    <property type="pathway name" value="Activation of NF-kappaB in B cells"/>
</dbReference>
<dbReference type="Reactome" id="R-RNO-1234176">
    <property type="pathway name" value="Oxygen-dependent proline hydroxylation of Hypoxia-inducible Factor Alpha"/>
</dbReference>
<dbReference type="Reactome" id="R-RNO-1253288">
    <property type="pathway name" value="Downregulation of ERBB4 signaling"/>
</dbReference>
<dbReference type="Reactome" id="R-RNO-1295596">
    <property type="pathway name" value="Spry regulation of FGF signaling"/>
</dbReference>
<dbReference type="Reactome" id="R-RNO-1358803">
    <property type="pathway name" value="Downregulation of ERBB2:ERBB3 signaling"/>
</dbReference>
<dbReference type="Reactome" id="R-RNO-156827">
    <property type="pathway name" value="L13a-mediated translational silencing of Ceruloplasmin expression"/>
</dbReference>
<dbReference type="Reactome" id="R-RNO-168638">
    <property type="pathway name" value="NOD1/2 Signaling Pathway"/>
</dbReference>
<dbReference type="Reactome" id="R-RNO-174048">
    <property type="pathway name" value="APC/C:Cdc20 mediated degradation of Cyclin B"/>
</dbReference>
<dbReference type="Reactome" id="R-RNO-174084">
    <property type="pathway name" value="Autodegradation of Cdh1 by Cdh1:APC/C"/>
</dbReference>
<dbReference type="Reactome" id="R-RNO-174113">
    <property type="pathway name" value="SCF-beta-TrCP mediated degradation of Emi1"/>
</dbReference>
<dbReference type="Reactome" id="R-RNO-174154">
    <property type="pathway name" value="APC/C:Cdc20 mediated degradation of Securin"/>
</dbReference>
<dbReference type="Reactome" id="R-RNO-174178">
    <property type="pathway name" value="APC/C:Cdh1 mediated degradation of Cdc20 and other APC/C:Cdh1 targeted proteins in late mitosis/early G1"/>
</dbReference>
<dbReference type="Reactome" id="R-RNO-174184">
    <property type="pathway name" value="Cdc20:Phospho-APC/C mediated degradation of Cyclin A"/>
</dbReference>
<dbReference type="Reactome" id="R-RNO-179409">
    <property type="pathway name" value="APC-Cdc20 mediated degradation of Nek2A"/>
</dbReference>
<dbReference type="Reactome" id="R-RNO-1799339">
    <property type="pathway name" value="SRP-dependent cotranslational protein targeting to membrane"/>
</dbReference>
<dbReference type="Reactome" id="R-RNO-182971">
    <property type="pathway name" value="EGFR downregulation"/>
</dbReference>
<dbReference type="Reactome" id="R-RNO-187577">
    <property type="pathway name" value="SCF(Skp2)-mediated degradation of p27/p21"/>
</dbReference>
<dbReference type="Reactome" id="R-RNO-195253">
    <property type="pathway name" value="Degradation of beta-catenin by the destruction complex"/>
</dbReference>
<dbReference type="Reactome" id="R-RNO-201681">
    <property type="pathway name" value="TCF dependent signaling in response to WNT"/>
</dbReference>
<dbReference type="Reactome" id="R-RNO-205043">
    <property type="pathway name" value="NRIF signals cell death from the nucleus"/>
</dbReference>
<dbReference type="Reactome" id="R-RNO-209543">
    <property type="pathway name" value="p75NTR recruits signalling complexes"/>
</dbReference>
<dbReference type="Reactome" id="R-RNO-209560">
    <property type="pathway name" value="NF-kB is activated and signals survival"/>
</dbReference>
<dbReference type="Reactome" id="R-RNO-2122948">
    <property type="pathway name" value="Activated NOTCH1 Transmits Signal to the Nucleus"/>
</dbReference>
<dbReference type="Reactome" id="R-RNO-2173788">
    <property type="pathway name" value="Downregulation of TGF-beta receptor signaling"/>
</dbReference>
<dbReference type="Reactome" id="R-RNO-2173791">
    <property type="pathway name" value="TGF-beta receptor signaling in EMT (epithelial to mesenchymal transition)"/>
</dbReference>
<dbReference type="Reactome" id="R-RNO-2173795">
    <property type="pathway name" value="Downregulation of SMAD2/3:SMAD4 transcriptional activity"/>
</dbReference>
<dbReference type="Reactome" id="R-RNO-2173796">
    <property type="pathway name" value="SMAD2/SMAD3:SMAD4 heterotrimer regulates transcription"/>
</dbReference>
<dbReference type="Reactome" id="R-RNO-2467813">
    <property type="pathway name" value="Separation of Sister Chromatids"/>
</dbReference>
<dbReference type="Reactome" id="R-RNO-2559580">
    <property type="pathway name" value="Oxidative Stress Induced Senescence"/>
</dbReference>
<dbReference type="Reactome" id="R-RNO-2559582">
    <property type="pathway name" value="Senescence-Associated Secretory Phenotype (SASP)"/>
</dbReference>
<dbReference type="Reactome" id="R-RNO-2559585">
    <property type="pathway name" value="Oncogene Induced Senescence"/>
</dbReference>
<dbReference type="Reactome" id="R-RNO-2565942">
    <property type="pathway name" value="Regulation of PLK1 Activity at G2/M Transition"/>
</dbReference>
<dbReference type="Reactome" id="R-RNO-2672351">
    <property type="pathway name" value="Stimuli-sensing channels"/>
</dbReference>
<dbReference type="Reactome" id="R-RNO-3134975">
    <property type="pathway name" value="Regulation of innate immune responses to cytosolic DNA"/>
</dbReference>
<dbReference type="Reactome" id="R-RNO-349425">
    <property type="pathway name" value="Autodegradation of the E3 ubiquitin ligase COP1"/>
</dbReference>
<dbReference type="Reactome" id="R-RNO-3769402">
    <property type="pathway name" value="Deactivation of the beta-catenin transactivating complex"/>
</dbReference>
<dbReference type="Reactome" id="R-RNO-382556">
    <property type="pathway name" value="ABC-family proteins mediated transport"/>
</dbReference>
<dbReference type="Reactome" id="R-RNO-450302">
    <property type="pathway name" value="activated TAK1 mediates p38 MAPK activation"/>
</dbReference>
<dbReference type="Reactome" id="R-RNO-450321">
    <property type="pathway name" value="JNK (c-Jun kinases) phosphorylation and activation mediated by activated human TAK1"/>
</dbReference>
<dbReference type="Reactome" id="R-RNO-450408">
    <property type="pathway name" value="AUF1 (hnRNP D0) binds and destabilizes mRNA"/>
</dbReference>
<dbReference type="Reactome" id="R-RNO-4608870">
    <property type="pathway name" value="Asymmetric localization of PCP proteins"/>
</dbReference>
<dbReference type="Reactome" id="R-RNO-4641257">
    <property type="pathway name" value="Degradation of AXIN"/>
</dbReference>
<dbReference type="Reactome" id="R-RNO-4641258">
    <property type="pathway name" value="Degradation of DVL"/>
</dbReference>
<dbReference type="Reactome" id="R-RNO-4641263">
    <property type="pathway name" value="Regulation of FZD by ubiquitination"/>
</dbReference>
<dbReference type="Reactome" id="R-RNO-532668">
    <property type="pathway name" value="N-glycan trimming in the ER and Calnexin/Calreticulin cycle"/>
</dbReference>
<dbReference type="Reactome" id="R-RNO-5357905">
    <property type="pathway name" value="Regulation of TNFR1 signaling"/>
</dbReference>
<dbReference type="Reactome" id="R-RNO-5357956">
    <property type="pathway name" value="TNFR1-induced NF-kappa-B signaling pathway"/>
</dbReference>
<dbReference type="Reactome" id="R-RNO-5358346">
    <property type="pathway name" value="Hedgehog ligand biogenesis"/>
</dbReference>
<dbReference type="Reactome" id="R-RNO-5607761">
    <property type="pathway name" value="Dectin-1 mediated noncanonical NF-kB signaling"/>
</dbReference>
<dbReference type="Reactome" id="R-RNO-5610780">
    <property type="pathway name" value="Degradation of GLI1 by the proteasome"/>
</dbReference>
<dbReference type="Reactome" id="R-RNO-5610785">
    <property type="pathway name" value="GLI3 is processed to GLI3R by the proteasome"/>
</dbReference>
<dbReference type="Reactome" id="R-RNO-5632684">
    <property type="pathway name" value="Hedgehog 'on' state"/>
</dbReference>
<dbReference type="Reactome" id="R-RNO-5654726">
    <property type="pathway name" value="Negative regulation of FGFR1 signaling"/>
</dbReference>
<dbReference type="Reactome" id="R-RNO-5654727">
    <property type="pathway name" value="Negative regulation of FGFR2 signaling"/>
</dbReference>
<dbReference type="Reactome" id="R-RNO-5654732">
    <property type="pathway name" value="Negative regulation of FGFR3 signaling"/>
</dbReference>
<dbReference type="Reactome" id="R-RNO-5654733">
    <property type="pathway name" value="Negative regulation of FGFR4 signaling"/>
</dbReference>
<dbReference type="Reactome" id="R-RNO-5655862">
    <property type="pathway name" value="Translesion synthesis by POLK"/>
</dbReference>
<dbReference type="Reactome" id="R-RNO-5656121">
    <property type="pathway name" value="Translesion synthesis by POLI"/>
</dbReference>
<dbReference type="Reactome" id="R-RNO-5656169">
    <property type="pathway name" value="Termination of translesion DNA synthesis"/>
</dbReference>
<dbReference type="Reactome" id="R-RNO-5658442">
    <property type="pathway name" value="Regulation of RAS by GAPs"/>
</dbReference>
<dbReference type="Reactome" id="R-RNO-5668541">
    <property type="pathway name" value="TNFR2 non-canonical NF-kB pathway"/>
</dbReference>
<dbReference type="Reactome" id="R-RNO-5675221">
    <property type="pathway name" value="Negative regulation of MAPK pathway"/>
</dbReference>
<dbReference type="Reactome" id="R-RNO-5675482">
    <property type="pathway name" value="Regulation of necroptotic cell death"/>
</dbReference>
<dbReference type="Reactome" id="R-RNO-5676590">
    <property type="pathway name" value="NIK--&gt;noncanonical NF-kB signaling"/>
</dbReference>
<dbReference type="Reactome" id="R-RNO-5685942">
    <property type="pathway name" value="HDR through Homologous Recombination (HRR)"/>
</dbReference>
<dbReference type="Reactome" id="R-RNO-5687128">
    <property type="pathway name" value="MAPK6/MAPK4 signaling"/>
</dbReference>
<dbReference type="Reactome" id="R-RNO-5689603">
    <property type="pathway name" value="UCH proteinases"/>
</dbReference>
<dbReference type="Reactome" id="R-RNO-5689877">
    <property type="pathway name" value="Josephin domain DUBs"/>
</dbReference>
<dbReference type="Reactome" id="R-RNO-5689880">
    <property type="pathway name" value="Ub-specific processing proteases"/>
</dbReference>
<dbReference type="Reactome" id="R-RNO-5689896">
    <property type="pathway name" value="Ovarian tumor domain proteases"/>
</dbReference>
<dbReference type="Reactome" id="R-RNO-5689901">
    <property type="pathway name" value="Metalloprotease DUBs"/>
</dbReference>
<dbReference type="Reactome" id="R-RNO-5693565">
    <property type="pathway name" value="Recruitment and ATM-mediated phosphorylation of repair and signaling proteins at DNA double strand breaks"/>
</dbReference>
<dbReference type="Reactome" id="R-RNO-5696394">
    <property type="pathway name" value="DNA Damage Recognition in GG-NER"/>
</dbReference>
<dbReference type="Reactome" id="R-RNO-5696395">
    <property type="pathway name" value="Formation of Incision Complex in GG-NER"/>
</dbReference>
<dbReference type="Reactome" id="R-RNO-5696397">
    <property type="pathway name" value="Gap-filling DNA repair synthesis and ligation in GG-NER"/>
</dbReference>
<dbReference type="Reactome" id="R-RNO-5696400">
    <property type="pathway name" value="Dual Incision in GG-NER"/>
</dbReference>
<dbReference type="Reactome" id="R-RNO-6781823">
    <property type="pathway name" value="Formation of TC-NER Pre-Incision Complex"/>
</dbReference>
<dbReference type="Reactome" id="R-RNO-6782135">
    <property type="pathway name" value="Dual incision in TC-NER"/>
</dbReference>
<dbReference type="Reactome" id="R-RNO-6782210">
    <property type="pathway name" value="Gap-filling DNA repair synthesis and ligation in TC-NER"/>
</dbReference>
<dbReference type="Reactome" id="R-RNO-6783310">
    <property type="pathway name" value="Fanconi Anemia Pathway"/>
</dbReference>
<dbReference type="Reactome" id="R-RNO-6791226">
    <property type="pathway name" value="Major pathway of rRNA processing in the nucleolus and cytosol"/>
</dbReference>
<dbReference type="Reactome" id="R-RNO-6804756">
    <property type="pathway name" value="Regulation of TP53 Activity through Phosphorylation"/>
</dbReference>
<dbReference type="Reactome" id="R-RNO-6804757">
    <property type="pathway name" value="Regulation of TP53 Degradation"/>
</dbReference>
<dbReference type="Reactome" id="R-RNO-6804760">
    <property type="pathway name" value="Regulation of TP53 Activity through Methylation"/>
</dbReference>
<dbReference type="Reactome" id="R-RNO-6807004">
    <property type="pathway name" value="Negative regulation of MET activity"/>
</dbReference>
<dbReference type="Reactome" id="R-RNO-68867">
    <property type="pathway name" value="Assembly of the pre-replicative complex"/>
</dbReference>
<dbReference type="Reactome" id="R-RNO-68949">
    <property type="pathway name" value="Orc1 removal from chromatin"/>
</dbReference>
<dbReference type="Reactome" id="R-RNO-69017">
    <property type="pathway name" value="CDK-mediated phosphorylation and removal of Cdc6"/>
</dbReference>
<dbReference type="Reactome" id="R-RNO-69231">
    <property type="pathway name" value="Cyclin D associated events in G1"/>
</dbReference>
<dbReference type="Reactome" id="R-RNO-69481">
    <property type="pathway name" value="G2/M Checkpoints"/>
</dbReference>
<dbReference type="Reactome" id="R-RNO-69541">
    <property type="pathway name" value="Stabilization of p53"/>
</dbReference>
<dbReference type="Reactome" id="R-RNO-69601">
    <property type="pathway name" value="Ubiquitin Mediated Degradation of Phosphorylated Cdc25A"/>
</dbReference>
<dbReference type="Reactome" id="R-RNO-72649">
    <property type="pathway name" value="Translation initiation complex formation"/>
</dbReference>
<dbReference type="Reactome" id="R-RNO-72689">
    <property type="pathway name" value="Formation of a pool of free 40S subunits"/>
</dbReference>
<dbReference type="Reactome" id="R-RNO-72695">
    <property type="pathway name" value="Formation of the ternary complex, and subsequently, the 43S complex"/>
</dbReference>
<dbReference type="Reactome" id="R-RNO-72702">
    <property type="pathway name" value="Ribosomal scanning and start codon recognition"/>
</dbReference>
<dbReference type="Reactome" id="R-RNO-72706">
    <property type="pathway name" value="GTP hydrolysis and joining of the 60S ribosomal subunit"/>
</dbReference>
<dbReference type="Reactome" id="R-RNO-75815">
    <property type="pathway name" value="Ubiquitin-dependent degradation of Cyclin D"/>
</dbReference>
<dbReference type="Reactome" id="R-RNO-8849469">
    <property type="pathway name" value="PTK6 Regulates RTKs and Their Effectors AKT1 and DOK1"/>
</dbReference>
<dbReference type="Reactome" id="R-RNO-8852276">
    <property type="pathway name" value="The role of GTSE1 in G2/M progression after G2 checkpoint"/>
</dbReference>
<dbReference type="Reactome" id="R-RNO-8854050">
    <property type="pathway name" value="FBXL7 down-regulates AURKA during mitotic entry and in early mitosis"/>
</dbReference>
<dbReference type="Reactome" id="R-RNO-8856825">
    <property type="pathway name" value="Cargo recognition for clathrin-mediated endocytosis"/>
</dbReference>
<dbReference type="Reactome" id="R-RNO-8856828">
    <property type="pathway name" value="Clathrin-mediated endocytosis"/>
</dbReference>
<dbReference type="Reactome" id="R-RNO-8863795">
    <property type="pathway name" value="Downregulation of ERBB2 signaling"/>
</dbReference>
<dbReference type="Reactome" id="R-RNO-8866427">
    <property type="pathway name" value="VLDLR internalisation and degradation"/>
</dbReference>
<dbReference type="Reactome" id="R-RNO-8866652">
    <property type="pathway name" value="Synthesis of active ubiquitin: roles of E1 and E2 enzymes"/>
</dbReference>
<dbReference type="Reactome" id="R-RNO-8866654">
    <property type="pathway name" value="E3 ubiquitin ligases ubiquitinate target proteins"/>
</dbReference>
<dbReference type="Reactome" id="R-RNO-8939236">
    <property type="pathway name" value="RUNX1 regulates transcription of genes involved in differentiation of HSCs"/>
</dbReference>
<dbReference type="Reactome" id="R-RNO-8941858">
    <property type="pathway name" value="Regulation of RUNX3 expression and activity"/>
</dbReference>
<dbReference type="Reactome" id="R-RNO-8948747">
    <property type="pathway name" value="Regulation of PTEN localization"/>
</dbReference>
<dbReference type="Reactome" id="R-RNO-8948751">
    <property type="pathway name" value="Regulation of PTEN stability and activity"/>
</dbReference>
<dbReference type="Reactome" id="R-RNO-8951664">
    <property type="pathway name" value="Neddylation"/>
</dbReference>
<dbReference type="Reactome" id="R-RNO-901032">
    <property type="pathway name" value="ER Quality Control Compartment (ERQC)"/>
</dbReference>
<dbReference type="Reactome" id="R-RNO-9013507">
    <property type="pathway name" value="NOTCH3 Activation and Transmission of Signal to the Nucleus"/>
</dbReference>
<dbReference type="Reactome" id="R-RNO-9020702">
    <property type="pathway name" value="Interleukin-1 signaling"/>
</dbReference>
<dbReference type="Reactome" id="R-RNO-9033241">
    <property type="pathway name" value="Peroxisomal protein import"/>
</dbReference>
<dbReference type="Reactome" id="R-RNO-909733">
    <property type="pathway name" value="Interferon alpha/beta signaling"/>
</dbReference>
<dbReference type="Reactome" id="R-RNO-912631">
    <property type="pathway name" value="Regulation of signaling by CBL"/>
</dbReference>
<dbReference type="Reactome" id="R-RNO-917729">
    <property type="pathway name" value="Endosomal Sorting Complex Required For Transport (ESCRT)"/>
</dbReference>
<dbReference type="Reactome" id="R-RNO-917937">
    <property type="pathway name" value="Iron uptake and transport"/>
</dbReference>
<dbReference type="Reactome" id="R-RNO-936440">
    <property type="pathway name" value="Negative regulators of DDX58/IFIH1 signaling"/>
</dbReference>
<dbReference type="Reactome" id="R-RNO-936964">
    <property type="pathway name" value="Activation of IRF3, IRF7 mediated by TBK1, IKKEpsilon (IKBKE)"/>
</dbReference>
<dbReference type="Reactome" id="R-RNO-937041">
    <property type="pathway name" value="IKK complex recruitment mediated by RIP1"/>
</dbReference>
<dbReference type="Reactome" id="R-RNO-937042">
    <property type="pathway name" value="IRAK2 mediated activation of TAK1 complex"/>
</dbReference>
<dbReference type="Reactome" id="R-RNO-937072">
    <property type="pathway name" value="TRAF6-mediated induction of TAK1 complex within TLR4 complex"/>
</dbReference>
<dbReference type="Reactome" id="R-RNO-9645460">
    <property type="pathway name" value="Alpha-protein kinase 1 signaling pathway"/>
</dbReference>
<dbReference type="Reactome" id="R-RNO-9646399">
    <property type="pathway name" value="Aggrephagy"/>
</dbReference>
<dbReference type="Reactome" id="R-RNO-9648002">
    <property type="pathway name" value="RAS processing"/>
</dbReference>
<dbReference type="Reactome" id="R-RNO-9664873">
    <property type="pathway name" value="Pexophagy"/>
</dbReference>
<dbReference type="Reactome" id="R-RNO-9705462">
    <property type="pathway name" value="Inactivation of CSF3 (G-CSF) signaling"/>
</dbReference>
<dbReference type="Reactome" id="R-RNO-975163">
    <property type="pathway name" value="IRAK2 mediated activation of TAK1 complex upon TLR7/8 or 9 stimulation"/>
</dbReference>
<dbReference type="Reactome" id="R-RNO-9755511">
    <property type="pathway name" value="KEAP1-NFE2L2 pathway"/>
</dbReference>
<dbReference type="Reactome" id="R-RNO-9758274">
    <property type="pathway name" value="Regulation of NF-kappa B signaling"/>
</dbReference>
<dbReference type="Reactome" id="R-RNO-975956">
    <property type="pathway name" value="Nonsense Mediated Decay (NMD) independent of the Exon Junction Complex (EJC)"/>
</dbReference>
<dbReference type="Reactome" id="R-RNO-975957">
    <property type="pathway name" value="Nonsense Mediated Decay (NMD) enhanced by the Exon Junction Complex (EJC)"/>
</dbReference>
<dbReference type="Reactome" id="R-RNO-9762114">
    <property type="pathway name" value="GSK3B and BTRC:CUL1-mediated-degradation of NFE2L2"/>
</dbReference>
<dbReference type="Reactome" id="R-RNO-9824878">
    <property type="pathway name" value="Regulation of TBK1, IKKEpsilon (IKBKE)-mediated activation of IRF3, IRF7"/>
</dbReference>
<dbReference type="Reactome" id="R-RNO-983168">
    <property type="pathway name" value="Antigen processing: Ubiquitination &amp; Proteasome degradation"/>
</dbReference>
<dbReference type="Reactome" id="R-RNO-9861718">
    <property type="pathway name" value="Regulation of pyruvate metabolism"/>
</dbReference>
<dbReference type="PRO" id="PR:P62982"/>
<dbReference type="Proteomes" id="UP000002494">
    <property type="component" value="Chromosome 14"/>
</dbReference>
<dbReference type="Proteomes" id="UP000002494">
    <property type="component" value="Chromosome 5"/>
</dbReference>
<dbReference type="Bgee" id="ENSRNOG00000004426">
    <property type="expression patterns" value="Expressed in pancreas and 13 other cell types or tissues"/>
</dbReference>
<dbReference type="ExpressionAtlas" id="P62982">
    <property type="expression patterns" value="baseline and differential"/>
</dbReference>
<dbReference type="GO" id="GO:0005737">
    <property type="term" value="C:cytoplasm"/>
    <property type="evidence" value="ECO:0000318"/>
    <property type="project" value="GO_Central"/>
</dbReference>
<dbReference type="GO" id="GO:0022626">
    <property type="term" value="C:cytosolic ribosome"/>
    <property type="evidence" value="ECO:0000266"/>
    <property type="project" value="RGD"/>
</dbReference>
<dbReference type="GO" id="GO:0022627">
    <property type="term" value="C:cytosolic small ribosomal subunit"/>
    <property type="evidence" value="ECO:0000314"/>
    <property type="project" value="RGD"/>
</dbReference>
<dbReference type="GO" id="GO:0005730">
    <property type="term" value="C:nucleolus"/>
    <property type="evidence" value="ECO:0007669"/>
    <property type="project" value="UniProtKB-SubCell"/>
</dbReference>
<dbReference type="GO" id="GO:0005634">
    <property type="term" value="C:nucleus"/>
    <property type="evidence" value="ECO:0000318"/>
    <property type="project" value="GO_Central"/>
</dbReference>
<dbReference type="GO" id="GO:0032040">
    <property type="term" value="C:small-subunit processome"/>
    <property type="evidence" value="ECO:0000250"/>
    <property type="project" value="UniProtKB"/>
</dbReference>
<dbReference type="GO" id="GO:0045202">
    <property type="term" value="C:synapse"/>
    <property type="evidence" value="ECO:0000266"/>
    <property type="project" value="RGD"/>
</dbReference>
<dbReference type="GO" id="GO:0031386">
    <property type="term" value="F:protein tag activity"/>
    <property type="evidence" value="ECO:0000318"/>
    <property type="project" value="GO_Central"/>
</dbReference>
<dbReference type="GO" id="GO:0003735">
    <property type="term" value="F:structural constituent of ribosome"/>
    <property type="evidence" value="ECO:0000266"/>
    <property type="project" value="RGD"/>
</dbReference>
<dbReference type="GO" id="GO:0031625">
    <property type="term" value="F:ubiquitin protein ligase binding"/>
    <property type="evidence" value="ECO:0000318"/>
    <property type="project" value="GO_Central"/>
</dbReference>
<dbReference type="GO" id="GO:0008270">
    <property type="term" value="F:zinc ion binding"/>
    <property type="evidence" value="ECO:0007669"/>
    <property type="project" value="UniProtKB-KW"/>
</dbReference>
<dbReference type="GO" id="GO:0019941">
    <property type="term" value="P:modification-dependent protein catabolic process"/>
    <property type="evidence" value="ECO:0000318"/>
    <property type="project" value="GO_Central"/>
</dbReference>
<dbReference type="GO" id="GO:0016567">
    <property type="term" value="P:protein ubiquitination"/>
    <property type="evidence" value="ECO:0000318"/>
    <property type="project" value="GO_Central"/>
</dbReference>
<dbReference type="GO" id="GO:0042274">
    <property type="term" value="P:ribosomal small subunit biogenesis"/>
    <property type="evidence" value="ECO:0000250"/>
    <property type="project" value="UniProtKB"/>
</dbReference>
<dbReference type="GO" id="GO:0006412">
    <property type="term" value="P:translation"/>
    <property type="evidence" value="ECO:0007669"/>
    <property type="project" value="InterPro"/>
</dbReference>
<dbReference type="CDD" id="cd01803">
    <property type="entry name" value="Ubl_ubiquitin"/>
    <property type="match status" value="1"/>
</dbReference>
<dbReference type="FunFam" id="3.10.20.90:FF:000008">
    <property type="entry name" value="Ubiquitin-40S ribosomal protein S27a"/>
    <property type="match status" value="1"/>
</dbReference>
<dbReference type="Gene3D" id="6.20.50.150">
    <property type="match status" value="1"/>
</dbReference>
<dbReference type="Gene3D" id="3.10.20.90">
    <property type="entry name" value="Phosphatidylinositol 3-kinase Catalytic Subunit, Chain A, domain 1"/>
    <property type="match status" value="1"/>
</dbReference>
<dbReference type="InterPro" id="IPR002906">
    <property type="entry name" value="Ribosomal_eS31"/>
</dbReference>
<dbReference type="InterPro" id="IPR038582">
    <property type="entry name" value="Ribosomal_eS31_euk-type_sf"/>
</dbReference>
<dbReference type="InterPro" id="IPR011332">
    <property type="entry name" value="Ribosomal_zn-bd"/>
</dbReference>
<dbReference type="InterPro" id="IPR000626">
    <property type="entry name" value="Ubiquitin-like_dom"/>
</dbReference>
<dbReference type="InterPro" id="IPR029071">
    <property type="entry name" value="Ubiquitin-like_domsf"/>
</dbReference>
<dbReference type="InterPro" id="IPR019954">
    <property type="entry name" value="Ubiquitin_CS"/>
</dbReference>
<dbReference type="InterPro" id="IPR019956">
    <property type="entry name" value="Ubiquitin_dom"/>
</dbReference>
<dbReference type="InterPro" id="IPR050158">
    <property type="entry name" value="Ubiquitin_ubiquitin-like"/>
</dbReference>
<dbReference type="PANTHER" id="PTHR10666">
    <property type="entry name" value="UBIQUITIN"/>
    <property type="match status" value="1"/>
</dbReference>
<dbReference type="Pfam" id="PF01599">
    <property type="entry name" value="Ribosomal_S27"/>
    <property type="match status" value="1"/>
</dbReference>
<dbReference type="Pfam" id="PF00240">
    <property type="entry name" value="ubiquitin"/>
    <property type="match status" value="1"/>
</dbReference>
<dbReference type="PRINTS" id="PR00348">
    <property type="entry name" value="UBIQUITIN"/>
</dbReference>
<dbReference type="SMART" id="SM01402">
    <property type="entry name" value="Ribosomal_S27"/>
    <property type="match status" value="1"/>
</dbReference>
<dbReference type="SMART" id="SM00213">
    <property type="entry name" value="UBQ"/>
    <property type="match status" value="1"/>
</dbReference>
<dbReference type="SUPFAM" id="SSF54236">
    <property type="entry name" value="Ubiquitin-like"/>
    <property type="match status" value="1"/>
</dbReference>
<dbReference type="SUPFAM" id="SSF57829">
    <property type="entry name" value="Zn-binding ribosomal proteins"/>
    <property type="match status" value="1"/>
</dbReference>
<dbReference type="PROSITE" id="PS00299">
    <property type="entry name" value="UBIQUITIN_1"/>
    <property type="match status" value="1"/>
</dbReference>
<dbReference type="PROSITE" id="PS50053">
    <property type="entry name" value="UBIQUITIN_2"/>
    <property type="match status" value="1"/>
</dbReference>
<protein>
    <recommendedName>
        <fullName evidence="5">Ubiquitin-ribosomal protein eS31 fusion protein</fullName>
    </recommendedName>
    <alternativeName>
        <fullName>Ubiquitin carboxyl extension protein 80</fullName>
    </alternativeName>
    <component>
        <recommendedName>
            <fullName>Ubiquitin</fullName>
        </recommendedName>
    </component>
    <component>
        <recommendedName>
            <fullName evidence="5">Small ribosomal subunit protein eS31</fullName>
        </recommendedName>
        <alternativeName>
            <fullName>40S ribosomal protein S27a</fullName>
        </alternativeName>
    </component>
</protein>
<accession>P62982</accession>
<accession>P02248</accession>
<accession>P02249</accession>
<accession>P02250</accession>
<accession>P49664</accession>
<accession>P62989</accession>
<accession>Q29120</accession>
<accession>Q63446</accession>
<accession>Q91887</accession>
<accession>Q91888</accession>
<accession>Q9D2W3</accession>
<gene>
    <name type="primary">Rps27a</name>
    <name type="synonym">Uba80</name>
    <name type="synonym">Ubcep1</name>
</gene>
<feature type="chain" id="PRO_0000396480" description="Ubiquitin">
    <location>
        <begin position="1"/>
        <end position="76"/>
    </location>
</feature>
<feature type="chain" id="PRO_0000137664" description="Small ribosomal subunit protein eS31">
    <location>
        <begin position="77"/>
        <end position="156"/>
    </location>
</feature>
<feature type="domain" description="Ubiquitin-like" evidence="4">
    <location>
        <begin position="1"/>
        <end position="76"/>
    </location>
</feature>
<feature type="zinc finger region" description="C4-type">
    <location>
        <begin position="121"/>
        <end position="144"/>
    </location>
</feature>
<feature type="site" description="Interacts with activating enzyme">
    <location>
        <position position="54"/>
    </location>
</feature>
<feature type="site" description="Essential for function">
    <location>
        <position position="68"/>
    </location>
</feature>
<feature type="site" description="Interacts with activating enzyme">
    <location>
        <position position="72"/>
    </location>
</feature>
<feature type="modified residue" description="Phosphoserine; by PINK1" evidence="2">
    <location>
        <position position="65"/>
    </location>
</feature>
<feature type="modified residue" description="ADP-ribosylglycine" evidence="2">
    <location>
        <position position="76"/>
    </location>
</feature>
<feature type="modified residue" description="N6-acetyllysine" evidence="2">
    <location>
        <position position="104"/>
    </location>
</feature>
<feature type="modified residue" description="N6-acetyllysine" evidence="2">
    <location>
        <position position="113"/>
    </location>
</feature>
<feature type="modified residue" description="N6-acetyllysine" evidence="3">
    <location>
        <position position="152"/>
    </location>
</feature>
<feature type="cross-link" description="Glycyl lysine isopeptide (Lys-Gly) (interchain with G-Cter in ubiquitin)" evidence="2">
    <location>
        <position position="6"/>
    </location>
</feature>
<feature type="cross-link" description="Glycyl lysine isopeptide (Lys-Gly) (interchain with G-Cter in ubiquitin)" evidence="2">
    <location>
        <position position="11"/>
    </location>
</feature>
<feature type="cross-link" description="Glycyl lysine isopeptide (Lys-Gly) (interchain with G-Cter in ubiquitin)" evidence="2">
    <location>
        <position position="27"/>
    </location>
</feature>
<feature type="cross-link" description="Glycyl lysine isopeptide (Lys-Gly) (interchain with G-Cter in ubiquitin)" evidence="2">
    <location>
        <position position="29"/>
    </location>
</feature>
<feature type="cross-link" description="Glycyl lysine isopeptide (Lys-Gly) (interchain with G-Cter in ubiquitin)" evidence="2">
    <location>
        <position position="33"/>
    </location>
</feature>
<feature type="cross-link" description="Glycyl lysine isopeptide (Lys-Gly) (interchain with G-Cter in ubiquitin)" evidence="2">
    <location>
        <position position="48"/>
    </location>
</feature>
<feature type="cross-link" description="Glycyl lysine isopeptide (Lys-Gly) (interchain with G-Cter in ubiquitin)" evidence="2">
    <location>
        <position position="63"/>
    </location>
</feature>
<feature type="cross-link" description="Glycyl lysine isopeptide (Gly-Lys) (interchain with K-? in acceptor proteins)">
    <location>
        <position position="76"/>
    </location>
</feature>
<feature type="cross-link" description="Glycyl lysine isopeptide (Lys-Gly) (interchain with G-Cter in ubiquitin)" evidence="2">
    <location>
        <position position="107"/>
    </location>
</feature>
<feature type="cross-link" description="Glycyl lysine isopeptide (Lys-Gly) (interchain with G-Cter in ubiquitin)" evidence="2">
    <location>
        <position position="113"/>
    </location>
</feature>
<name>RS27A_RAT</name>
<comment type="function">
    <molecule>Ubiquitin</molecule>
    <text evidence="2">Exists either covalently attached to another protein, or free (unanchored). When covalently bound, it is conjugated to target proteins via an isopeptide bond either as a monomer (monoubiquitin), a polymer linked via different Lys residues of the ubiquitin (polyubiquitin chains) or a linear polymer linked via the initiator Met of the ubiquitin (linear polyubiquitin chains). Polyubiquitin chains, when attached to a target protein, have different functions depending on the Lys residue of the ubiquitin that is linked: Lys-6-linked may be involved in DNA repair; Lys-11-linked is involved in ERAD (endoplasmic reticulum-associated degradation) and in cell-cycle regulation; Lys-29-linked is involved in proteotoxic stress response and cell cycle; Lys-33-linked is involved in kinase modification; Lys-48-linked is involved in protein degradation via the proteasome; Lys-63-linked is involved in endocytosis, DNA-damage responses as well as in signaling processes leading to activation of the transcription factor NF-kappa-B. Linear polymer chains formed via attachment by the initiator Met lead to cell signaling. Ubiquitin is usually conjugated to Lys residues of target proteins, however, in rare cases, conjugation to Cys or Ser residues has been observed. When polyubiquitin is free (unanchored-polyubiquitin), it also has distinct roles, such as in activation of protein kinases, and in signaling.</text>
</comment>
<comment type="function">
    <molecule>Small ribosomal subunit protein eS31</molecule>
    <text evidence="2">Component of the 40S subunit of the ribosome. Part of the small subunit (SSU) processome, first precursor of the small eukaryotic ribosomal subunit. During the assembly of the SSU processome in the nucleolus, many ribosome biogenesis factors, an RNA chaperone and ribosomal proteins associate with the nascent pre-rRNA and work in concert to generate RNA folding, modifications, rearrangements and cleavage as well as targeted degradation of pre-ribosomal RNA by the RNA exosome.</text>
</comment>
<comment type="subunit">
    <molecule>Small ribosomal subunit protein eS31</molecule>
    <text evidence="2">Part of the 40S ribosomal subunit. Part of the small subunit (SSU) processome, composed of more than 70 proteins and the RNA chaperone small nucleolar RNA (snoRNA) U3.</text>
</comment>
<comment type="subcellular location">
    <molecule>Ubiquitin</molecule>
    <subcellularLocation>
        <location evidence="1">Cytoplasm</location>
    </subcellularLocation>
    <subcellularLocation>
        <location evidence="1">Nucleus</location>
    </subcellularLocation>
</comment>
<comment type="subcellular location">
    <molecule>Small ribosomal subunit protein eS31</molecule>
    <subcellularLocation>
        <location evidence="2">Nucleus</location>
        <location evidence="2">Nucleolus</location>
    </subcellularLocation>
</comment>
<comment type="PTM">
    <molecule>Ubiquitin</molecule>
    <text evidence="2">Phosphorylated at Ser-65 by PINK1 during mitophagy. Phosphorylated ubiquitin specifically binds and activates parkin (PRKN), triggering mitophagy. Phosphorylation does not affect E1-mediated E2 charging of ubiquitin but affects discharging of E2 enzymes to form polyubiquitin chains. It also affects deubiquitination by deubiquitinase enzymes such as USP30.</text>
</comment>
<comment type="PTM">
    <molecule>Ubiquitin</molecule>
    <text evidence="2">Mono-ADP-ribosylated at the C-terminus by PARP9, a component of the PPAR9-DTX3L complex. ADP-ribosylation requires processing by E1 and E2 enzymes and prevents ubiquitin conjugation to substrates such as histones.</text>
</comment>
<comment type="PTM">
    <molecule>Small ribosomal subunit protein eS31</molecule>
    <text evidence="2">Monoubiquitinated at Lys-107 and Lys-113 by RNF25 in response to ribosome collisions (ribosome stalling): ubiquitination promotes subsequent activation of RNF14, leading to EEF1A1 ubiquitination and degradation and rescue of stalled ribosomes. Deubiquitination at Lys-113 by USP16 is required for maturation of the 40S ribosomal complex.</text>
</comment>
<comment type="miscellaneous">
    <text>Ubiquitin is encoded by 4 different genes. Uba52 and Rps27a genes code for a single copy of ubiquitin fused to the ribosomal proteins eL40 and eS31, respectively. UBB and UBC genes code for a polyubiquitin precursor with exact head to tail repeats, the number of repeats differ between species and strains.</text>
</comment>
<comment type="similarity">
    <text evidence="5">In the N-terminal section; belongs to the ubiquitin family.</text>
</comment>
<comment type="similarity">
    <text evidence="5">In the C-terminal section; belongs to the eukaryotic ribosomal protein eS31 family.</text>
</comment>